<evidence type="ECO:0000250" key="1">
    <source>
        <dbReference type="UniProtKB" id="A0A509AUY5"/>
    </source>
</evidence>
<evidence type="ECO:0000250" key="2">
    <source>
        <dbReference type="UniProtKB" id="P41181"/>
    </source>
</evidence>
<evidence type="ECO:0000250" key="3">
    <source>
        <dbReference type="UniProtKB" id="P55087"/>
    </source>
</evidence>
<evidence type="ECO:0000255" key="4"/>
<evidence type="ECO:0000256" key="5">
    <source>
        <dbReference type="SAM" id="MobiDB-lite"/>
    </source>
</evidence>
<evidence type="ECO:0000269" key="6">
    <source>
    </source>
</evidence>
<evidence type="ECO:0000303" key="7">
    <source>
    </source>
</evidence>
<evidence type="ECO:0000305" key="8"/>
<evidence type="ECO:0000312" key="9">
    <source>
        <dbReference type="EMBL" id="EWC88897.1"/>
    </source>
</evidence>
<evidence type="ECO:0000312" key="10">
    <source>
        <dbReference type="EMBL" id="KAF4330236.1"/>
    </source>
</evidence>
<evidence type="ECO:0000312" key="11">
    <source>
        <dbReference type="EMBL" id="PKC47379.1"/>
    </source>
</evidence>
<evidence type="ECO:0000312" key="12">
    <source>
        <dbReference type="Proteomes" id="UP000030673"/>
    </source>
</evidence>
<evidence type="ECO:0000312" key="13">
    <source>
        <dbReference type="Proteomes" id="UP000232684"/>
    </source>
</evidence>
<evidence type="ECO:0000312" key="14">
    <source>
        <dbReference type="Proteomes" id="UP000754359"/>
    </source>
</evidence>
<organism evidence="12">
    <name type="scientific">Plasmodium falciparum (isolate NF54)</name>
    <dbReference type="NCBI Taxonomy" id="5843"/>
    <lineage>
        <taxon>Eukaryota</taxon>
        <taxon>Sar</taxon>
        <taxon>Alveolata</taxon>
        <taxon>Apicomplexa</taxon>
        <taxon>Aconoidasida</taxon>
        <taxon>Haemosporida</taxon>
        <taxon>Plasmodiidae</taxon>
        <taxon>Plasmodium</taxon>
        <taxon>Plasmodium (Laverania)</taxon>
    </lineage>
</organism>
<name>AQP2_PLAFO</name>
<feature type="chain" id="PRO_0000460638" description="Aquaporin-2">
    <location>
        <begin position="1"/>
        <end position="603"/>
    </location>
</feature>
<feature type="transmembrane region" description="Helical" evidence="7">
    <location>
        <begin position="40"/>
        <end position="70"/>
    </location>
</feature>
<feature type="transmembrane region" description="Helical" evidence="7">
    <location>
        <begin position="282"/>
        <end position="299"/>
    </location>
</feature>
<feature type="transmembrane region" description="Helical" evidence="7">
    <location>
        <begin position="321"/>
        <end position="346"/>
    </location>
</feature>
<feature type="transmembrane region" description="Helical" evidence="7">
    <location>
        <begin position="360"/>
        <end position="393"/>
    </location>
</feature>
<feature type="transmembrane region" description="Helical" evidence="7">
    <location>
        <begin position="442"/>
        <end position="471"/>
    </location>
</feature>
<feature type="transmembrane region" description="Helical" evidence="7">
    <location>
        <begin position="509"/>
        <end position="542"/>
    </location>
</feature>
<feature type="region of interest" description="Disordered" evidence="5">
    <location>
        <begin position="135"/>
        <end position="200"/>
    </location>
</feature>
<feature type="compositionally biased region" description="Basic and acidic residues" evidence="5">
    <location>
        <begin position="135"/>
        <end position="149"/>
    </location>
</feature>
<feature type="compositionally biased region" description="Basic and acidic residues" evidence="5">
    <location>
        <begin position="156"/>
        <end position="190"/>
    </location>
</feature>
<feature type="compositionally biased region" description="Polar residues" evidence="5">
    <location>
        <begin position="191"/>
        <end position="200"/>
    </location>
</feature>
<accession>W7KGE5</accession>
<sequence>MKIQKGLFFLQRSIKNVLRKIIKFIKGYVKDIIKEINVKSLKKYKYNLFFEFIGSFLFVFFISIYMLNSNSNEEYIIKHTKQINPYKTNDILIPGHNNFEAEINNIKYMNNLNQERKNVVASILLEKYDNEYKGNNKSKREVERDDDKISNNLQNEFEKDNEKKKNYDNINEKEISTTSDGKIKDMEDPKNISNKNENYDNTNMELKNEKINNKVNDEKNIKNEDDINNKENMLKSVDKIIFKEPVNEYSKIKIEDINNINLKDIDQYEVLKNSENKKSSNHAIYSFVGCFIYVIFILLGAHINPAYTYALWLTEPKKYGFALSTLYITFQYFGGIVASIICAHLYGSIFIYTLLPKKEIIKTFLCEFISTFLITLLLLSLYNYKKKFMEENKNDESLTFNINKLRNMSSLYNFNTYEDFYSYDMFSTNQNRKYNSFLYIDNKYIKYIMNHIFYLLFIFFSLLFFVFVTNTTLNPMFSTSTLYTYLYYKIFKASNSFKIYSIFISFLSITKIFQLLIFYIQSLPLWIGPYFGSAFAATFLSLFKENEEEIINIIDTNVYSSYNKKKEQIPLIDKNSAKQNAYLIEYNDNIHNNSYNYLLPSVF</sequence>
<comment type="function">
    <text evidence="6">Required for sporozoite development in the mosquito vector.</text>
</comment>
<comment type="catalytic activity">
    <reaction evidence="2">
        <text>H2O(in) = H2O(out)</text>
        <dbReference type="Rhea" id="RHEA:29667"/>
        <dbReference type="ChEBI" id="CHEBI:15377"/>
    </reaction>
</comment>
<comment type="catalytic activity">
    <reaction evidence="2">
        <text>glycerol(in) = glycerol(out)</text>
        <dbReference type="Rhea" id="RHEA:29675"/>
        <dbReference type="ChEBI" id="CHEBI:17754"/>
    </reaction>
</comment>
<comment type="subcellular location">
    <subcellularLocation>
        <location evidence="1">Endomembrane system</location>
        <topology evidence="4">Multi-pass membrane protein</topology>
    </subcellularLocation>
</comment>
<comment type="developmental stage">
    <text evidence="6">Low expression in blood stages (PubMed:37883438). Highest expression in gametocytes (PubMed:37883438). Expressed in mature ookinetes (PubMed:37883438). Low expression in oocysts with a limited increase in maturing sporozoites (PubMed:37883438).</text>
</comment>
<comment type="domain">
    <text evidence="3 7">Aquaporins contain two tandem repeats each containing three membrane-spanning domains and a pore-forming loop (By similarity). One of the two canonical Asn-Pro-Ala (NPA) motifs in the pore region, which are highly conserved in aquaporin water channels, is changed to Asn-Pro-Met (NPM) (PubMed:37883438).</text>
</comment>
<comment type="disruption phenotype">
    <text evidence="6">Dramatic reduction in development of mature sporozoites in the mosquito vector with no impact on any of the preceding stages.</text>
</comment>
<comment type="similarity">
    <text evidence="8">Belongs to the MIP/aquaporin (TC 1.A.8) family.</text>
</comment>
<protein>
    <recommendedName>
        <fullName evidence="7">Aquaporin-2</fullName>
        <shortName evidence="7">PfAQP2</shortName>
    </recommendedName>
</protein>
<proteinExistence type="evidence at transcript level"/>
<dbReference type="EMBL" id="KE123791">
    <property type="protein sequence ID" value="EWC88897.1"/>
    <property type="molecule type" value="Genomic_DNA"/>
</dbReference>
<dbReference type="EMBL" id="QFXU01000009">
    <property type="protein sequence ID" value="KAF4330236.1"/>
    <property type="molecule type" value="Genomic_DNA"/>
</dbReference>
<dbReference type="EMBL" id="NYMT01000006">
    <property type="protein sequence ID" value="PKC47379.1"/>
    <property type="molecule type" value="Genomic_DNA"/>
</dbReference>
<dbReference type="EnsemblProtists" id="EWC88897">
    <property type="protein sequence ID" value="EWC88897"/>
    <property type="gene ID" value="PFNF54_02168"/>
</dbReference>
<dbReference type="VEuPathDB" id="PlasmoDB:PfNF54_080014200"/>
<dbReference type="OMA" id="ILGAHIN"/>
<dbReference type="Proteomes" id="UP000030673">
    <property type="component" value="Unassembled WGS sequence"/>
</dbReference>
<dbReference type="Proteomes" id="UP000232684">
    <property type="component" value="Unassembled WGS sequence"/>
</dbReference>
<dbReference type="Proteomes" id="UP000754359">
    <property type="component" value="Unassembled WGS sequence"/>
</dbReference>
<dbReference type="GO" id="GO:0012505">
    <property type="term" value="C:endomembrane system"/>
    <property type="evidence" value="ECO:0007669"/>
    <property type="project" value="UniProtKB-SubCell"/>
</dbReference>
<dbReference type="GO" id="GO:0005886">
    <property type="term" value="C:plasma membrane"/>
    <property type="evidence" value="ECO:0007669"/>
    <property type="project" value="TreeGrafter"/>
</dbReference>
<dbReference type="GO" id="GO:0015250">
    <property type="term" value="F:water channel activity"/>
    <property type="evidence" value="ECO:0007669"/>
    <property type="project" value="TreeGrafter"/>
</dbReference>
<dbReference type="GO" id="GO:0044114">
    <property type="term" value="P:development of symbiont in host"/>
    <property type="evidence" value="ECO:0000315"/>
    <property type="project" value="UniProtKB"/>
</dbReference>
<dbReference type="Gene3D" id="1.20.1080.10">
    <property type="entry name" value="Glycerol uptake facilitator protein"/>
    <property type="match status" value="1"/>
</dbReference>
<dbReference type="InterPro" id="IPR023271">
    <property type="entry name" value="Aquaporin-like"/>
</dbReference>
<dbReference type="InterPro" id="IPR034294">
    <property type="entry name" value="Aquaporin_transptr"/>
</dbReference>
<dbReference type="InterPro" id="IPR000425">
    <property type="entry name" value="MIP"/>
</dbReference>
<dbReference type="PANTHER" id="PTHR19139">
    <property type="entry name" value="AQUAPORIN TRANSPORTER"/>
    <property type="match status" value="1"/>
</dbReference>
<dbReference type="PANTHER" id="PTHR19139:SF199">
    <property type="entry name" value="MIP17260P"/>
    <property type="match status" value="1"/>
</dbReference>
<dbReference type="Pfam" id="PF00230">
    <property type="entry name" value="MIP"/>
    <property type="match status" value="1"/>
</dbReference>
<dbReference type="SUPFAM" id="SSF81338">
    <property type="entry name" value="Aquaporin-like"/>
    <property type="match status" value="1"/>
</dbReference>
<keyword id="KW-0472">Membrane</keyword>
<keyword id="KW-1185">Reference proteome</keyword>
<keyword id="KW-0812">Transmembrane</keyword>
<keyword id="KW-1133">Transmembrane helix</keyword>
<reference evidence="12" key="1">
    <citation type="submission" date="2013-02" db="EMBL/GenBank/DDBJ databases">
        <title>The Genome Sequence of Plasmodium falciparum NF54.</title>
        <authorList>
            <consortium name="The Broad Institute Genome Sequencing Platform"/>
            <consortium name="The Broad Institute Genome Sequencing Center for Infectious Disease"/>
            <person name="Neafsey D."/>
            <person name="Cheeseman I."/>
            <person name="Volkman S."/>
            <person name="Adams J."/>
            <person name="Walker B."/>
            <person name="Young S.K."/>
            <person name="Zeng Q."/>
            <person name="Gargeya S."/>
            <person name="Fitzgerald M."/>
            <person name="Haas B."/>
            <person name="Abouelleil A."/>
            <person name="Alvarado L."/>
            <person name="Arachchi H.M."/>
            <person name="Berlin A.M."/>
            <person name="Chapman S.B."/>
            <person name="Dewar J."/>
            <person name="Goldberg J."/>
            <person name="Griggs A."/>
            <person name="Gujja S."/>
            <person name="Hansen M."/>
            <person name="Howarth C."/>
            <person name="Imamovic A."/>
            <person name="Larimer J."/>
            <person name="McCowan C."/>
            <person name="Murphy C."/>
            <person name="Neiman D."/>
            <person name="Pearson M."/>
            <person name="Priest M."/>
            <person name="Roberts A."/>
            <person name="Saif S."/>
            <person name="Shea T."/>
            <person name="Sisk P."/>
            <person name="Sykes S."/>
            <person name="Wortman J."/>
            <person name="Nusbaum C."/>
            <person name="Birren B."/>
        </authorList>
    </citation>
    <scope>NUCLEOTIDE SEQUENCE [LARGE SCALE GENOMIC DNA]</scope>
    <source>
        <strain evidence="12">NF54</strain>
    </source>
</reference>
<reference evidence="13" key="2">
    <citation type="submission" date="2017-11" db="EMBL/GenBank/DDBJ databases">
        <title>Plasmodium falciparum NF54 genome assembly.</title>
        <authorList>
            <person name="Bryant J.M."/>
            <person name="Baumgarten S."/>
            <person name="Scheidig-Benatar C."/>
            <person name="Scherf A."/>
        </authorList>
    </citation>
    <scope>NUCLEOTIDE SEQUENCE [LARGE SCALE GENOMIC DNA]</scope>
    <source>
        <strain evidence="11">NF54</strain>
    </source>
</reference>
<reference evidence="14" key="3">
    <citation type="submission" date="2018-05" db="EMBL/GenBank/DDBJ databases">
        <title>Genome assembly of Plasmodium falciparum NF54 DiCre.</title>
        <authorList>
            <person name="Baumgarten S."/>
            <person name="Treeck M."/>
            <person name="Scherf A."/>
        </authorList>
    </citation>
    <scope>NUCLEOTIDE SEQUENCE [LARGE SCALE GENOMIC DNA]</scope>
    <source>
        <strain evidence="10">NF54</strain>
    </source>
</reference>
<reference evidence="8" key="4">
    <citation type="journal article" date="2023" name="Proc. Natl. Acad. Sci. U.S.A.">
        <title>Intracellular Plasmodium aquaporin 2 is important for sporozoite production in the mosquito vector and malaria transmission.</title>
        <authorList>
            <person name="Bailey A.J."/>
            <person name="Ukegbu C.V."/>
            <person name="Giorgalli M."/>
            <person name="Besson T.R.B."/>
            <person name="Christophides G.K."/>
            <person name="Vlachou D."/>
        </authorList>
    </citation>
    <scope>FUNCTION</scope>
    <scope>DEVELOPMENTAL STAGE</scope>
    <scope>DISRUPTION PHENOTYPE</scope>
    <source>
        <strain evidence="7">NF54</strain>
    </source>
</reference>
<gene>
    <name evidence="7" type="primary">AQP2</name>
    <name evidence="11" type="ORF">CK202_2255</name>
    <name evidence="10" type="ORF">CYL21_1300</name>
    <name evidence="9" type="ORF">PFNF54_02168</name>
</gene>